<sequence length="237" mass="25178">MGAQWKAKGKAQAADARGKLFGRLAKDIMVAARGGADPASNSRLRLVVEQARKVSMPKDTLERAIKKGAGLTGEAVHFEHVMYEGFAPHQVPVMVECLTDNVKRTAPEMRVLFRKGHLGASGSVAWDFDHVGMIEAEPVVAGSDPEVAAIEAGAEDFEPGHEEGTTLFLTAPTDLDLVSRALPAQGFTVISAKLGYKPKNPIDPASLDPAHLEEVEAFLAAIDANDDVQNVFVGLAG</sequence>
<organism>
    <name type="scientific">Polaromonas sp. (strain JS666 / ATCC BAA-500)</name>
    <dbReference type="NCBI Taxonomy" id="296591"/>
    <lineage>
        <taxon>Bacteria</taxon>
        <taxon>Pseudomonadati</taxon>
        <taxon>Pseudomonadota</taxon>
        <taxon>Betaproteobacteria</taxon>
        <taxon>Burkholderiales</taxon>
        <taxon>Comamonadaceae</taxon>
        <taxon>Polaromonas</taxon>
    </lineage>
</organism>
<name>Y2928_POLSJ</name>
<proteinExistence type="inferred from homology"/>
<comment type="subcellular location">
    <subcellularLocation>
        <location evidence="1">Cytoplasm</location>
    </subcellularLocation>
</comment>
<comment type="similarity">
    <text evidence="1">Belongs to the TACO1 family.</text>
</comment>
<accession>Q129F0</accession>
<feature type="chain" id="PRO_0000257097" description="Probable transcriptional regulatory protein Bpro_2928">
    <location>
        <begin position="1"/>
        <end position="237"/>
    </location>
</feature>
<reference key="1">
    <citation type="journal article" date="2008" name="Appl. Environ. Microbiol.">
        <title>The genome of Polaromonas sp. strain JS666: insights into the evolution of a hydrocarbon- and xenobiotic-degrading bacterium, and features of relevance to biotechnology.</title>
        <authorList>
            <person name="Mattes T.E."/>
            <person name="Alexander A.K."/>
            <person name="Richardson P.M."/>
            <person name="Munk A.C."/>
            <person name="Han C.S."/>
            <person name="Stothard P."/>
            <person name="Coleman N.V."/>
        </authorList>
    </citation>
    <scope>NUCLEOTIDE SEQUENCE [LARGE SCALE GENOMIC DNA]</scope>
    <source>
        <strain>JS666 / ATCC BAA-500</strain>
    </source>
</reference>
<gene>
    <name type="ordered locus">Bpro_2928</name>
</gene>
<dbReference type="EMBL" id="CP000316">
    <property type="protein sequence ID" value="ABE44842.1"/>
    <property type="molecule type" value="Genomic_DNA"/>
</dbReference>
<dbReference type="RefSeq" id="WP_011483840.1">
    <property type="nucleotide sequence ID" value="NC_007948.1"/>
</dbReference>
<dbReference type="SMR" id="Q129F0"/>
<dbReference type="STRING" id="296591.Bpro_2928"/>
<dbReference type="KEGG" id="pol:Bpro_2928"/>
<dbReference type="eggNOG" id="COG0217">
    <property type="taxonomic scope" value="Bacteria"/>
</dbReference>
<dbReference type="HOGENOM" id="CLU_062974_2_2_4"/>
<dbReference type="OrthoDB" id="9781053at2"/>
<dbReference type="Proteomes" id="UP000001983">
    <property type="component" value="Chromosome"/>
</dbReference>
<dbReference type="GO" id="GO:0005737">
    <property type="term" value="C:cytoplasm"/>
    <property type="evidence" value="ECO:0007669"/>
    <property type="project" value="UniProtKB-SubCell"/>
</dbReference>
<dbReference type="GO" id="GO:0003677">
    <property type="term" value="F:DNA binding"/>
    <property type="evidence" value="ECO:0007669"/>
    <property type="project" value="UniProtKB-UniRule"/>
</dbReference>
<dbReference type="GO" id="GO:0006355">
    <property type="term" value="P:regulation of DNA-templated transcription"/>
    <property type="evidence" value="ECO:0007669"/>
    <property type="project" value="UniProtKB-UniRule"/>
</dbReference>
<dbReference type="Gene3D" id="1.10.10.200">
    <property type="match status" value="1"/>
</dbReference>
<dbReference type="Gene3D" id="3.30.70.980">
    <property type="match status" value="2"/>
</dbReference>
<dbReference type="HAMAP" id="MF_00693">
    <property type="entry name" value="Transcrip_reg_TACO1"/>
    <property type="match status" value="1"/>
</dbReference>
<dbReference type="InterPro" id="IPR017856">
    <property type="entry name" value="Integrase-like_N"/>
</dbReference>
<dbReference type="InterPro" id="IPR048300">
    <property type="entry name" value="TACO1_YebC-like_2nd/3rd_dom"/>
</dbReference>
<dbReference type="InterPro" id="IPR049083">
    <property type="entry name" value="TACO1_YebC_N"/>
</dbReference>
<dbReference type="InterPro" id="IPR002876">
    <property type="entry name" value="Transcrip_reg_TACO1-like"/>
</dbReference>
<dbReference type="InterPro" id="IPR026564">
    <property type="entry name" value="Transcrip_reg_TACO1-like_dom3"/>
</dbReference>
<dbReference type="InterPro" id="IPR029072">
    <property type="entry name" value="YebC-like"/>
</dbReference>
<dbReference type="NCBIfam" id="NF009044">
    <property type="entry name" value="PRK12378.1"/>
    <property type="match status" value="1"/>
</dbReference>
<dbReference type="PANTHER" id="PTHR12532">
    <property type="entry name" value="TRANSLATIONAL ACTIVATOR OF CYTOCHROME C OXIDASE 1"/>
    <property type="match status" value="1"/>
</dbReference>
<dbReference type="PANTHER" id="PTHR12532:SF0">
    <property type="entry name" value="TRANSLATIONAL ACTIVATOR OF CYTOCHROME C OXIDASE 1"/>
    <property type="match status" value="1"/>
</dbReference>
<dbReference type="Pfam" id="PF20772">
    <property type="entry name" value="TACO1_YebC_N"/>
    <property type="match status" value="1"/>
</dbReference>
<dbReference type="Pfam" id="PF01709">
    <property type="entry name" value="Transcrip_reg"/>
    <property type="match status" value="1"/>
</dbReference>
<dbReference type="SUPFAM" id="SSF75625">
    <property type="entry name" value="YebC-like"/>
    <property type="match status" value="1"/>
</dbReference>
<protein>
    <recommendedName>
        <fullName evidence="1">Probable transcriptional regulatory protein Bpro_2928</fullName>
    </recommendedName>
</protein>
<evidence type="ECO:0000255" key="1">
    <source>
        <dbReference type="HAMAP-Rule" id="MF_00693"/>
    </source>
</evidence>
<keyword id="KW-0963">Cytoplasm</keyword>
<keyword id="KW-0238">DNA-binding</keyword>
<keyword id="KW-1185">Reference proteome</keyword>
<keyword id="KW-0804">Transcription</keyword>
<keyword id="KW-0805">Transcription regulation</keyword>